<dbReference type="InParanoid" id="P80815"/>
<dbReference type="Proteomes" id="UP000004994">
    <property type="component" value="Unplaced"/>
</dbReference>
<dbReference type="GO" id="GO:0005576">
    <property type="term" value="C:extracellular region"/>
    <property type="evidence" value="ECO:0007669"/>
    <property type="project" value="UniProtKB-KW"/>
</dbReference>
<protein>
    <recommendedName>
        <fullName>76 kDa cell wall protein</fullName>
    </recommendedName>
</protein>
<accession>P80815</accession>
<comment type="subcellular location">
    <subcellularLocation>
        <location evidence="1">Secreted</location>
        <location evidence="1">Cell wall</location>
    </subcellularLocation>
</comment>
<organism>
    <name type="scientific">Solanum lycopersicum</name>
    <name type="common">Tomato</name>
    <name type="synonym">Lycopersicon esculentum</name>
    <dbReference type="NCBI Taxonomy" id="4081"/>
    <lineage>
        <taxon>Eukaryota</taxon>
        <taxon>Viridiplantae</taxon>
        <taxon>Streptophyta</taxon>
        <taxon>Embryophyta</taxon>
        <taxon>Tracheophyta</taxon>
        <taxon>Spermatophyta</taxon>
        <taxon>Magnoliopsida</taxon>
        <taxon>eudicotyledons</taxon>
        <taxon>Gunneridae</taxon>
        <taxon>Pentapetalae</taxon>
        <taxon>asterids</taxon>
        <taxon>lamiids</taxon>
        <taxon>Solanales</taxon>
        <taxon>Solanaceae</taxon>
        <taxon>Solanoideae</taxon>
        <taxon>Solaneae</taxon>
        <taxon>Solanum</taxon>
        <taxon>Solanum subgen. Lycopersicon</taxon>
    </lineage>
</organism>
<name>CWP19_SOLLC</name>
<sequence length="18" mass="1994">STRTPEFLGLDNQCGVWA</sequence>
<evidence type="ECO:0000269" key="1">
    <source>
    </source>
</evidence>
<evidence type="ECO:0000303" key="2">
    <source>
    </source>
</evidence>
<evidence type="ECO:0000305" key="3"/>
<reference evidence="3" key="1">
    <citation type="journal article" date="1997" name="J. Biol. Chem.">
        <title>Differential extraction and protein sequencing reveals major differences in patterns of primary cell wall proteins from plants.</title>
        <authorList>
            <person name="Robertson D."/>
            <person name="Mitchell G.P."/>
            <person name="Gilroy J.S."/>
            <person name="Gerrish C."/>
            <person name="Bolwell G.P."/>
            <person name="Slabas A.R."/>
        </authorList>
    </citation>
    <scope>PROTEIN SEQUENCE</scope>
    <scope>SUBCELLULAR LOCATION</scope>
</reference>
<keyword id="KW-0134">Cell wall</keyword>
<keyword id="KW-0903">Direct protein sequencing</keyword>
<keyword id="KW-1185">Reference proteome</keyword>
<keyword id="KW-0964">Secreted</keyword>
<proteinExistence type="evidence at protein level"/>
<feature type="chain" id="PRO_0000079688" description="76 kDa cell wall protein">
    <location>
        <begin position="1"/>
        <end position="18" status="greater than"/>
    </location>
</feature>
<feature type="non-terminal residue" evidence="2">
    <location>
        <position position="18"/>
    </location>
</feature>